<organism>
    <name type="scientific">Escherichia coli O7:K1 (strain IAI39 / ExPEC)</name>
    <dbReference type="NCBI Taxonomy" id="585057"/>
    <lineage>
        <taxon>Bacteria</taxon>
        <taxon>Pseudomonadati</taxon>
        <taxon>Pseudomonadota</taxon>
        <taxon>Gammaproteobacteria</taxon>
        <taxon>Enterobacterales</taxon>
        <taxon>Enterobacteriaceae</taxon>
        <taxon>Escherichia</taxon>
    </lineage>
</organism>
<sequence length="97" mass="10387">MNIRPLHDRVIVKRKEVETKSAGGIVLTGSAAAKSTRGEVLAVGNGRILENGEVKPLDVKVGDIVIFNDGYGVKSEKIDNEEVLIMSESDILAIVEA</sequence>
<proteinExistence type="inferred from homology"/>
<feature type="chain" id="PRO_1000129653" description="Co-chaperonin GroES">
    <location>
        <begin position="1"/>
        <end position="97"/>
    </location>
</feature>
<accession>B7NTK1</accession>
<protein>
    <recommendedName>
        <fullName evidence="1">Co-chaperonin GroES</fullName>
    </recommendedName>
    <alternativeName>
        <fullName evidence="1">10 kDa chaperonin</fullName>
    </alternativeName>
    <alternativeName>
        <fullName evidence="1">Chaperonin-10</fullName>
        <shortName evidence="1">Cpn10</shortName>
    </alternativeName>
</protein>
<dbReference type="EMBL" id="CU928164">
    <property type="protein sequence ID" value="CAR20707.1"/>
    <property type="molecule type" value="Genomic_DNA"/>
</dbReference>
<dbReference type="RefSeq" id="WP_001026276.1">
    <property type="nucleotide sequence ID" value="NC_011750.1"/>
</dbReference>
<dbReference type="RefSeq" id="YP_002410471.1">
    <property type="nucleotide sequence ID" value="NC_011750.1"/>
</dbReference>
<dbReference type="SMR" id="B7NTK1"/>
<dbReference type="STRING" id="585057.ECIAI39_4607"/>
<dbReference type="KEGG" id="ect:ECIAI39_4607"/>
<dbReference type="PATRIC" id="fig|585057.6.peg.4754"/>
<dbReference type="HOGENOM" id="CLU_132825_1_1_6"/>
<dbReference type="Proteomes" id="UP000000749">
    <property type="component" value="Chromosome"/>
</dbReference>
<dbReference type="GO" id="GO:0005737">
    <property type="term" value="C:cytoplasm"/>
    <property type="evidence" value="ECO:0007669"/>
    <property type="project" value="UniProtKB-SubCell"/>
</dbReference>
<dbReference type="GO" id="GO:0005524">
    <property type="term" value="F:ATP binding"/>
    <property type="evidence" value="ECO:0007669"/>
    <property type="project" value="InterPro"/>
</dbReference>
<dbReference type="GO" id="GO:0046872">
    <property type="term" value="F:metal ion binding"/>
    <property type="evidence" value="ECO:0007669"/>
    <property type="project" value="TreeGrafter"/>
</dbReference>
<dbReference type="GO" id="GO:0044183">
    <property type="term" value="F:protein folding chaperone"/>
    <property type="evidence" value="ECO:0007669"/>
    <property type="project" value="InterPro"/>
</dbReference>
<dbReference type="GO" id="GO:0051087">
    <property type="term" value="F:protein-folding chaperone binding"/>
    <property type="evidence" value="ECO:0007669"/>
    <property type="project" value="TreeGrafter"/>
</dbReference>
<dbReference type="GO" id="GO:0051082">
    <property type="term" value="F:unfolded protein binding"/>
    <property type="evidence" value="ECO:0007669"/>
    <property type="project" value="TreeGrafter"/>
</dbReference>
<dbReference type="GO" id="GO:0051085">
    <property type="term" value="P:chaperone cofactor-dependent protein refolding"/>
    <property type="evidence" value="ECO:0007669"/>
    <property type="project" value="TreeGrafter"/>
</dbReference>
<dbReference type="CDD" id="cd00320">
    <property type="entry name" value="cpn10"/>
    <property type="match status" value="1"/>
</dbReference>
<dbReference type="FunFam" id="2.30.33.40:FF:000001">
    <property type="entry name" value="10 kDa chaperonin"/>
    <property type="match status" value="1"/>
</dbReference>
<dbReference type="Gene3D" id="2.30.33.40">
    <property type="entry name" value="GroES chaperonin"/>
    <property type="match status" value="1"/>
</dbReference>
<dbReference type="HAMAP" id="MF_00580">
    <property type="entry name" value="CH10"/>
    <property type="match status" value="1"/>
</dbReference>
<dbReference type="InterPro" id="IPR020818">
    <property type="entry name" value="Chaperonin_GroES"/>
</dbReference>
<dbReference type="InterPro" id="IPR037124">
    <property type="entry name" value="Chaperonin_GroES_sf"/>
</dbReference>
<dbReference type="InterPro" id="IPR018369">
    <property type="entry name" value="Chaprnonin_Cpn10_CS"/>
</dbReference>
<dbReference type="InterPro" id="IPR011032">
    <property type="entry name" value="GroES-like_sf"/>
</dbReference>
<dbReference type="NCBIfam" id="NF001526">
    <property type="entry name" value="PRK00364.1-1"/>
    <property type="match status" value="1"/>
</dbReference>
<dbReference type="NCBIfam" id="NF001527">
    <property type="entry name" value="PRK00364.1-2"/>
    <property type="match status" value="1"/>
</dbReference>
<dbReference type="NCBIfam" id="NF001531">
    <property type="entry name" value="PRK00364.2-2"/>
    <property type="match status" value="1"/>
</dbReference>
<dbReference type="PANTHER" id="PTHR10772">
    <property type="entry name" value="10 KDA HEAT SHOCK PROTEIN"/>
    <property type="match status" value="1"/>
</dbReference>
<dbReference type="PANTHER" id="PTHR10772:SF58">
    <property type="entry name" value="CO-CHAPERONIN GROES"/>
    <property type="match status" value="1"/>
</dbReference>
<dbReference type="Pfam" id="PF00166">
    <property type="entry name" value="Cpn10"/>
    <property type="match status" value="1"/>
</dbReference>
<dbReference type="PRINTS" id="PR00297">
    <property type="entry name" value="CHAPERONIN10"/>
</dbReference>
<dbReference type="SMART" id="SM00883">
    <property type="entry name" value="Cpn10"/>
    <property type="match status" value="1"/>
</dbReference>
<dbReference type="SUPFAM" id="SSF50129">
    <property type="entry name" value="GroES-like"/>
    <property type="match status" value="1"/>
</dbReference>
<dbReference type="PROSITE" id="PS00681">
    <property type="entry name" value="CHAPERONINS_CPN10"/>
    <property type="match status" value="1"/>
</dbReference>
<evidence type="ECO:0000255" key="1">
    <source>
        <dbReference type="HAMAP-Rule" id="MF_00580"/>
    </source>
</evidence>
<keyword id="KW-0143">Chaperone</keyword>
<keyword id="KW-0963">Cytoplasm</keyword>
<comment type="function">
    <text evidence="1">Together with the chaperonin GroEL, plays an essential role in assisting protein folding. The GroEL-GroES system forms a nano-cage that allows encapsulation of the non-native substrate proteins and provides a physical environment optimized to promote and accelerate protein folding. GroES binds to the apical surface of the GroEL ring, thereby capping the opening of the GroEL channel.</text>
</comment>
<comment type="subunit">
    <text evidence="1">Heptamer of 7 subunits arranged in a ring. Interacts with the chaperonin GroEL.</text>
</comment>
<comment type="subcellular location">
    <subcellularLocation>
        <location evidence="1">Cytoplasm</location>
    </subcellularLocation>
</comment>
<comment type="similarity">
    <text evidence="1">Belongs to the GroES chaperonin family.</text>
</comment>
<gene>
    <name evidence="1" type="primary">groES</name>
    <name evidence="1" type="synonym">groS</name>
    <name type="ordered locus">ECIAI39_4607</name>
</gene>
<reference key="1">
    <citation type="journal article" date="2009" name="PLoS Genet.">
        <title>Organised genome dynamics in the Escherichia coli species results in highly diverse adaptive paths.</title>
        <authorList>
            <person name="Touchon M."/>
            <person name="Hoede C."/>
            <person name="Tenaillon O."/>
            <person name="Barbe V."/>
            <person name="Baeriswyl S."/>
            <person name="Bidet P."/>
            <person name="Bingen E."/>
            <person name="Bonacorsi S."/>
            <person name="Bouchier C."/>
            <person name="Bouvet O."/>
            <person name="Calteau A."/>
            <person name="Chiapello H."/>
            <person name="Clermont O."/>
            <person name="Cruveiller S."/>
            <person name="Danchin A."/>
            <person name="Diard M."/>
            <person name="Dossat C."/>
            <person name="Karoui M.E."/>
            <person name="Frapy E."/>
            <person name="Garry L."/>
            <person name="Ghigo J.M."/>
            <person name="Gilles A.M."/>
            <person name="Johnson J."/>
            <person name="Le Bouguenec C."/>
            <person name="Lescat M."/>
            <person name="Mangenot S."/>
            <person name="Martinez-Jehanne V."/>
            <person name="Matic I."/>
            <person name="Nassif X."/>
            <person name="Oztas S."/>
            <person name="Petit M.A."/>
            <person name="Pichon C."/>
            <person name="Rouy Z."/>
            <person name="Ruf C.S."/>
            <person name="Schneider D."/>
            <person name="Tourret J."/>
            <person name="Vacherie B."/>
            <person name="Vallenet D."/>
            <person name="Medigue C."/>
            <person name="Rocha E.P.C."/>
            <person name="Denamur E."/>
        </authorList>
    </citation>
    <scope>NUCLEOTIDE SEQUENCE [LARGE SCALE GENOMIC DNA]</scope>
    <source>
        <strain>IAI39 / ExPEC</strain>
    </source>
</reference>
<name>CH10_ECO7I</name>